<accession>F4HU51</accession>
<accession>Q56XD4</accession>
<accession>Q8GYW7</accession>
<accession>Q9LQ87</accession>
<accession>Q9LQ88</accession>
<gene>
    <name evidence="7" type="primary">ACH2</name>
    <name evidence="11" type="ordered locus">At1g01710</name>
    <name evidence="12" type="ORF">T1N6.10</name>
    <name evidence="13" type="ORF">T1N6.9</name>
</gene>
<name>ACH2_ARATH</name>
<keyword id="KW-0276">Fatty acid metabolism</keyword>
<keyword id="KW-0378">Hydrolase</keyword>
<keyword id="KW-0443">Lipid metabolism</keyword>
<keyword id="KW-0576">Peroxisome</keyword>
<keyword id="KW-1185">Reference proteome</keyword>
<reference key="1">
    <citation type="journal article" date="2004" name="J. Biol. Chem.">
        <title>Biochemical and molecular characterization of ACH2, an acyl-CoA thioesterase from Arabidopsis thaliana.</title>
        <authorList>
            <person name="Tilton G.B."/>
            <person name="Shockey J.M."/>
            <person name="Browse J."/>
        </authorList>
    </citation>
    <scope>NUCLEOTIDE SEQUENCE [MRNA]</scope>
    <scope>FUNCTION</scope>
    <scope>CATALYTIC ACTIVITY</scope>
    <scope>PATHWAY</scope>
    <scope>SUBUNIT</scope>
    <scope>BIOPHYSICOCHEMICAL PROPERTIES</scope>
    <scope>TISSUE SPECIFICITY</scope>
    <scope>ACTIVITY REGULATION</scope>
</reference>
<reference key="2">
    <citation type="journal article" date="2000" name="Nature">
        <title>Sequence and analysis of chromosome 1 of the plant Arabidopsis thaliana.</title>
        <authorList>
            <person name="Theologis A."/>
            <person name="Ecker J.R."/>
            <person name="Palm C.J."/>
            <person name="Federspiel N.A."/>
            <person name="Kaul S."/>
            <person name="White O."/>
            <person name="Alonso J."/>
            <person name="Altafi H."/>
            <person name="Araujo R."/>
            <person name="Bowman C.L."/>
            <person name="Brooks S.Y."/>
            <person name="Buehler E."/>
            <person name="Chan A."/>
            <person name="Chao Q."/>
            <person name="Chen H."/>
            <person name="Cheuk R.F."/>
            <person name="Chin C.W."/>
            <person name="Chung M.K."/>
            <person name="Conn L."/>
            <person name="Conway A.B."/>
            <person name="Conway A.R."/>
            <person name="Creasy T.H."/>
            <person name="Dewar K."/>
            <person name="Dunn P."/>
            <person name="Etgu P."/>
            <person name="Feldblyum T.V."/>
            <person name="Feng J.-D."/>
            <person name="Fong B."/>
            <person name="Fujii C.Y."/>
            <person name="Gill J.E."/>
            <person name="Goldsmith A.D."/>
            <person name="Haas B."/>
            <person name="Hansen N.F."/>
            <person name="Hughes B."/>
            <person name="Huizar L."/>
            <person name="Hunter J.L."/>
            <person name="Jenkins J."/>
            <person name="Johnson-Hopson C."/>
            <person name="Khan S."/>
            <person name="Khaykin E."/>
            <person name="Kim C.J."/>
            <person name="Koo H.L."/>
            <person name="Kremenetskaia I."/>
            <person name="Kurtz D.B."/>
            <person name="Kwan A."/>
            <person name="Lam B."/>
            <person name="Langin-Hooper S."/>
            <person name="Lee A."/>
            <person name="Lee J.M."/>
            <person name="Lenz C.A."/>
            <person name="Li J.H."/>
            <person name="Li Y.-P."/>
            <person name="Lin X."/>
            <person name="Liu S.X."/>
            <person name="Liu Z.A."/>
            <person name="Luros J.S."/>
            <person name="Maiti R."/>
            <person name="Marziali A."/>
            <person name="Militscher J."/>
            <person name="Miranda M."/>
            <person name="Nguyen M."/>
            <person name="Nierman W.C."/>
            <person name="Osborne B.I."/>
            <person name="Pai G."/>
            <person name="Peterson J."/>
            <person name="Pham P.K."/>
            <person name="Rizzo M."/>
            <person name="Rooney T."/>
            <person name="Rowley D."/>
            <person name="Sakano H."/>
            <person name="Salzberg S.L."/>
            <person name="Schwartz J.R."/>
            <person name="Shinn P."/>
            <person name="Southwick A.M."/>
            <person name="Sun H."/>
            <person name="Tallon L.J."/>
            <person name="Tambunga G."/>
            <person name="Toriumi M.J."/>
            <person name="Town C.D."/>
            <person name="Utterback T."/>
            <person name="Van Aken S."/>
            <person name="Vaysberg M."/>
            <person name="Vysotskaia V.S."/>
            <person name="Walker M."/>
            <person name="Wu D."/>
            <person name="Yu G."/>
            <person name="Fraser C.M."/>
            <person name="Venter J.C."/>
            <person name="Davis R.W."/>
        </authorList>
    </citation>
    <scope>NUCLEOTIDE SEQUENCE [LARGE SCALE GENOMIC DNA]</scope>
    <source>
        <strain>cv. Columbia</strain>
    </source>
</reference>
<reference key="3">
    <citation type="journal article" date="2017" name="Plant J.">
        <title>Araport11: a complete reannotation of the Arabidopsis thaliana reference genome.</title>
        <authorList>
            <person name="Cheng C.Y."/>
            <person name="Krishnakumar V."/>
            <person name="Chan A.P."/>
            <person name="Thibaud-Nissen F."/>
            <person name="Schobel S."/>
            <person name="Town C.D."/>
        </authorList>
    </citation>
    <scope>GENOME REANNOTATION</scope>
    <source>
        <strain>cv. Columbia</strain>
    </source>
</reference>
<reference key="4">
    <citation type="journal article" date="2002" name="Science">
        <title>Functional annotation of a full-length Arabidopsis cDNA collection.</title>
        <authorList>
            <person name="Seki M."/>
            <person name="Narusaka M."/>
            <person name="Kamiya A."/>
            <person name="Ishida J."/>
            <person name="Satou M."/>
            <person name="Sakurai T."/>
            <person name="Nakajima M."/>
            <person name="Enju A."/>
            <person name="Akiyama K."/>
            <person name="Oono Y."/>
            <person name="Muramatsu M."/>
            <person name="Hayashizaki Y."/>
            <person name="Kawai J."/>
            <person name="Carninci P."/>
            <person name="Itoh M."/>
            <person name="Ishii Y."/>
            <person name="Arakawa T."/>
            <person name="Shibata K."/>
            <person name="Shinagawa A."/>
            <person name="Shinozaki K."/>
        </authorList>
    </citation>
    <scope>NUCLEOTIDE SEQUENCE [LARGE SCALE MRNA]</scope>
    <source>
        <strain>cv. Columbia</strain>
    </source>
</reference>
<reference key="5">
    <citation type="journal article" date="2003" name="Science">
        <title>Empirical analysis of transcriptional activity in the Arabidopsis genome.</title>
        <authorList>
            <person name="Yamada K."/>
            <person name="Lim J."/>
            <person name="Dale J.M."/>
            <person name="Chen H."/>
            <person name="Shinn P."/>
            <person name="Palm C.J."/>
            <person name="Southwick A.M."/>
            <person name="Wu H.C."/>
            <person name="Kim C.J."/>
            <person name="Nguyen M."/>
            <person name="Pham P.K."/>
            <person name="Cheuk R.F."/>
            <person name="Karlin-Newmann G."/>
            <person name="Liu S.X."/>
            <person name="Lam B."/>
            <person name="Sakano H."/>
            <person name="Wu T."/>
            <person name="Yu G."/>
            <person name="Miranda M."/>
            <person name="Quach H.L."/>
            <person name="Tripp M."/>
            <person name="Chang C.H."/>
            <person name="Lee J.M."/>
            <person name="Toriumi M.J."/>
            <person name="Chan M.M."/>
            <person name="Tang C.C."/>
            <person name="Onodera C.S."/>
            <person name="Deng J.M."/>
            <person name="Akiyama K."/>
            <person name="Ansari Y."/>
            <person name="Arakawa T."/>
            <person name="Banh J."/>
            <person name="Banno F."/>
            <person name="Bowser L."/>
            <person name="Brooks S.Y."/>
            <person name="Carninci P."/>
            <person name="Chao Q."/>
            <person name="Choy N."/>
            <person name="Enju A."/>
            <person name="Goldsmith A.D."/>
            <person name="Gurjal M."/>
            <person name="Hansen N.F."/>
            <person name="Hayashizaki Y."/>
            <person name="Johnson-Hopson C."/>
            <person name="Hsuan V.W."/>
            <person name="Iida K."/>
            <person name="Karnes M."/>
            <person name="Khan S."/>
            <person name="Koesema E."/>
            <person name="Ishida J."/>
            <person name="Jiang P.X."/>
            <person name="Jones T."/>
            <person name="Kawai J."/>
            <person name="Kamiya A."/>
            <person name="Meyers C."/>
            <person name="Nakajima M."/>
            <person name="Narusaka M."/>
            <person name="Seki M."/>
            <person name="Sakurai T."/>
            <person name="Satou M."/>
            <person name="Tamse R."/>
            <person name="Vaysberg M."/>
            <person name="Wallender E.K."/>
            <person name="Wong C."/>
            <person name="Yamamura Y."/>
            <person name="Yuan S."/>
            <person name="Shinozaki K."/>
            <person name="Davis R.W."/>
            <person name="Theologis A."/>
            <person name="Ecker J.R."/>
        </authorList>
    </citation>
    <scope>NUCLEOTIDE SEQUENCE [LARGE SCALE MRNA]</scope>
    <source>
        <strain>cv. Columbia</strain>
    </source>
</reference>
<reference key="6">
    <citation type="submission" date="2005-03" db="EMBL/GenBank/DDBJ databases">
        <title>Large-scale analysis of RIKEN Arabidopsis full-length (RAFL) cDNAs.</title>
        <authorList>
            <person name="Totoki Y."/>
            <person name="Seki M."/>
            <person name="Ishida J."/>
            <person name="Nakajima M."/>
            <person name="Enju A."/>
            <person name="Kamiya A."/>
            <person name="Narusaka M."/>
            <person name="Shin-i T."/>
            <person name="Nakagawa M."/>
            <person name="Sakamoto N."/>
            <person name="Oishi K."/>
            <person name="Kohara Y."/>
            <person name="Kobayashi M."/>
            <person name="Toyoda A."/>
            <person name="Sakaki Y."/>
            <person name="Sakurai T."/>
            <person name="Iida K."/>
            <person name="Akiyama K."/>
            <person name="Satou M."/>
            <person name="Toyoda T."/>
            <person name="Konagaya A."/>
            <person name="Carninci P."/>
            <person name="Kawai J."/>
            <person name="Hayashizaki Y."/>
            <person name="Shinozaki K."/>
        </authorList>
    </citation>
    <scope>NUCLEOTIDE SEQUENCE [LARGE SCALE MRNA]</scope>
    <source>
        <strain>cv. Columbia</strain>
    </source>
</reference>
<reference key="7">
    <citation type="journal article" date="2000" name="Biochem. Soc. Trans.">
        <title>Two families of acyl-CoA thioesterases in Arabidopsis.</title>
        <authorList>
            <person name="Tilton G."/>
            <person name="Shockey J."/>
            <person name="Browse J."/>
        </authorList>
    </citation>
    <scope>FUNCTION</scope>
    <scope>CATALYTIC ACTIVITY</scope>
    <scope>PATHWAY</scope>
    <scope>GENE FAMILY</scope>
    <scope>NOMENCLATURE</scope>
</reference>
<reference key="8">
    <citation type="journal article" date="2013" name="Arabidopsis Book">
        <title>Acyl-lipid metabolism.</title>
        <authorList>
            <person name="Li-Beisson Y."/>
            <person name="Shorrosh B."/>
            <person name="Beisson F."/>
            <person name="Andersson M.X."/>
            <person name="Arondel V."/>
            <person name="Bates P.D."/>
            <person name="Baud S."/>
            <person name="Bird D."/>
            <person name="Debono A."/>
            <person name="Durrett T.P."/>
            <person name="Franke R.B."/>
            <person name="Graham I.A."/>
            <person name="Katayama K."/>
            <person name="Kelly A.A."/>
            <person name="Larson T."/>
            <person name="Markham J.E."/>
            <person name="Miquel M."/>
            <person name="Molina I."/>
            <person name="Nishida I."/>
            <person name="Rowland O."/>
            <person name="Samuels L."/>
            <person name="Schmid K.M."/>
            <person name="Wada H."/>
            <person name="Welti R."/>
            <person name="Xu C."/>
            <person name="Zallot R."/>
            <person name="Ohlrogge J."/>
        </authorList>
    </citation>
    <scope>REVIEW</scope>
</reference>
<protein>
    <recommendedName>
        <fullName evidence="7">Acyl-CoA hydrolase 2</fullName>
        <shortName evidence="7">AtACH2</shortName>
        <ecNumber evidence="5 6">3.1.2.20</ecNumber>
    </recommendedName>
    <alternativeName>
        <fullName evidence="7">Acyl-CoA thioesterase II</fullName>
        <shortName evidence="8">ACT-II</shortName>
    </alternativeName>
    <alternativeName>
        <fullName evidence="10">Hexadecanoyl-CoA hydrolase ACH2</fullName>
        <ecNumber evidence="6">3.1.2.2</ecNumber>
    </alternativeName>
</protein>
<proteinExistence type="evidence at protein level"/>
<evidence type="ECO:0000250" key="1">
    <source>
        <dbReference type="UniProtKB" id="O14734"/>
    </source>
</evidence>
<evidence type="ECO:0000250" key="2">
    <source>
        <dbReference type="UniProtKB" id="O55137"/>
    </source>
</evidence>
<evidence type="ECO:0000255" key="3"/>
<evidence type="ECO:0000255" key="4">
    <source>
        <dbReference type="PROSITE-ProRule" id="PRU00060"/>
    </source>
</evidence>
<evidence type="ECO:0000269" key="5">
    <source>
    </source>
</evidence>
<evidence type="ECO:0000269" key="6">
    <source>
    </source>
</evidence>
<evidence type="ECO:0000303" key="7">
    <source>
    </source>
</evidence>
<evidence type="ECO:0000303" key="8">
    <source>
    </source>
</evidence>
<evidence type="ECO:0000305" key="9"/>
<evidence type="ECO:0000305" key="10">
    <source>
    </source>
</evidence>
<evidence type="ECO:0000312" key="11">
    <source>
        <dbReference type="Araport" id="AT1G01710"/>
    </source>
</evidence>
<evidence type="ECO:0000312" key="12">
    <source>
        <dbReference type="EMBL" id="AAF78401.1"/>
    </source>
</evidence>
<evidence type="ECO:0000312" key="13">
    <source>
        <dbReference type="EMBL" id="AAF78421.1"/>
    </source>
</evidence>
<organism>
    <name type="scientific">Arabidopsis thaliana</name>
    <name type="common">Mouse-ear cress</name>
    <dbReference type="NCBI Taxonomy" id="3702"/>
    <lineage>
        <taxon>Eukaryota</taxon>
        <taxon>Viridiplantae</taxon>
        <taxon>Streptophyta</taxon>
        <taxon>Embryophyta</taxon>
        <taxon>Tracheophyta</taxon>
        <taxon>Spermatophyta</taxon>
        <taxon>Magnoliopsida</taxon>
        <taxon>eudicotyledons</taxon>
        <taxon>Gunneridae</taxon>
        <taxon>Pentapetalae</taxon>
        <taxon>rosids</taxon>
        <taxon>malvids</taxon>
        <taxon>Brassicales</taxon>
        <taxon>Brassicaceae</taxon>
        <taxon>Camelineae</taxon>
        <taxon>Arabidopsis</taxon>
    </lineage>
</organism>
<comment type="function">
    <text evidence="5 6">Catalyzes the hydrolysis of acyl-CoAs into free fatty acids and coenzyme A (CoASH), regulating their respective intracellular levels (PubMed:11171266, PubMed:14660652). Active with both medium chain and long chain acyl-CoAs (e.g. 12:0-CoA, 14:0-CoA, 16:0-CoA, 18:0-CoA, 16:1-CoA, 18:1-CoA, 18:2-CoA and 20:4-CoA) as substrates, palmitoleoyl-CoA (16:1-CoA) being the favorite substrate (PubMed:11171266, PubMed:14660652).</text>
</comment>
<comment type="catalytic activity">
    <reaction evidence="5 6">
        <text>a fatty acyl-CoA + H2O = a fatty acid + CoA + H(+)</text>
        <dbReference type="Rhea" id="RHEA:16781"/>
        <dbReference type="ChEBI" id="CHEBI:15377"/>
        <dbReference type="ChEBI" id="CHEBI:15378"/>
        <dbReference type="ChEBI" id="CHEBI:28868"/>
        <dbReference type="ChEBI" id="CHEBI:57287"/>
        <dbReference type="ChEBI" id="CHEBI:77636"/>
        <dbReference type="EC" id="3.1.2.20"/>
    </reaction>
</comment>
<comment type="catalytic activity">
    <reaction evidence="6">
        <text>dodecanoyl-CoA + H2O = dodecanoate + CoA + H(+)</text>
        <dbReference type="Rhea" id="RHEA:30135"/>
        <dbReference type="ChEBI" id="CHEBI:15377"/>
        <dbReference type="ChEBI" id="CHEBI:15378"/>
        <dbReference type="ChEBI" id="CHEBI:18262"/>
        <dbReference type="ChEBI" id="CHEBI:57287"/>
        <dbReference type="ChEBI" id="CHEBI:57375"/>
    </reaction>
    <physiologicalReaction direction="left-to-right" evidence="6">
        <dbReference type="Rhea" id="RHEA:30136"/>
    </physiologicalReaction>
</comment>
<comment type="catalytic activity">
    <reaction evidence="6">
        <text>tetradecanoyl-CoA + H2O = tetradecanoate + CoA + H(+)</text>
        <dbReference type="Rhea" id="RHEA:40119"/>
        <dbReference type="ChEBI" id="CHEBI:15377"/>
        <dbReference type="ChEBI" id="CHEBI:15378"/>
        <dbReference type="ChEBI" id="CHEBI:30807"/>
        <dbReference type="ChEBI" id="CHEBI:57287"/>
        <dbReference type="ChEBI" id="CHEBI:57385"/>
    </reaction>
    <physiologicalReaction direction="left-to-right" evidence="6">
        <dbReference type="Rhea" id="RHEA:40120"/>
    </physiologicalReaction>
</comment>
<comment type="catalytic activity">
    <reaction evidence="6">
        <text>octadecanoyl-CoA + H2O = octadecanoate + CoA + H(+)</text>
        <dbReference type="Rhea" id="RHEA:30139"/>
        <dbReference type="ChEBI" id="CHEBI:15377"/>
        <dbReference type="ChEBI" id="CHEBI:15378"/>
        <dbReference type="ChEBI" id="CHEBI:25629"/>
        <dbReference type="ChEBI" id="CHEBI:57287"/>
        <dbReference type="ChEBI" id="CHEBI:57394"/>
    </reaction>
    <physiologicalReaction direction="left-to-right" evidence="6">
        <dbReference type="Rhea" id="RHEA:30140"/>
    </physiologicalReaction>
</comment>
<comment type="catalytic activity">
    <reaction evidence="6">
        <text>(9Z)-hexadecenoyl-CoA + H2O = (9Z)-hexadecenoate + CoA + H(+)</text>
        <dbReference type="Rhea" id="RHEA:40131"/>
        <dbReference type="ChEBI" id="CHEBI:15377"/>
        <dbReference type="ChEBI" id="CHEBI:15378"/>
        <dbReference type="ChEBI" id="CHEBI:32372"/>
        <dbReference type="ChEBI" id="CHEBI:57287"/>
        <dbReference type="ChEBI" id="CHEBI:61540"/>
    </reaction>
    <physiologicalReaction direction="left-to-right" evidence="6">
        <dbReference type="Rhea" id="RHEA:40132"/>
    </physiologicalReaction>
</comment>
<comment type="catalytic activity">
    <reaction evidence="6">
        <text>(5Z,8Z,11Z,14Z)-eicosatetraenoyl-CoA + H2O = (5Z,8Z,11Z,14Z)-eicosatetraenoate + CoA + H(+)</text>
        <dbReference type="Rhea" id="RHEA:40151"/>
        <dbReference type="ChEBI" id="CHEBI:15377"/>
        <dbReference type="ChEBI" id="CHEBI:15378"/>
        <dbReference type="ChEBI" id="CHEBI:32395"/>
        <dbReference type="ChEBI" id="CHEBI:57287"/>
        <dbReference type="ChEBI" id="CHEBI:57368"/>
    </reaction>
    <physiologicalReaction direction="left-to-right" evidence="6">
        <dbReference type="Rhea" id="RHEA:40152"/>
    </physiologicalReaction>
</comment>
<comment type="catalytic activity">
    <reaction evidence="6">
        <text>hexadecanoyl-CoA + H2O = hexadecanoate + CoA + H(+)</text>
        <dbReference type="Rhea" id="RHEA:16645"/>
        <dbReference type="ChEBI" id="CHEBI:7896"/>
        <dbReference type="ChEBI" id="CHEBI:15377"/>
        <dbReference type="ChEBI" id="CHEBI:15378"/>
        <dbReference type="ChEBI" id="CHEBI:57287"/>
        <dbReference type="ChEBI" id="CHEBI:57379"/>
        <dbReference type="EC" id="3.1.2.2"/>
    </reaction>
    <physiologicalReaction direction="left-to-right" evidence="6">
        <dbReference type="Rhea" id="RHEA:16646"/>
    </physiologicalReaction>
</comment>
<comment type="catalytic activity">
    <reaction evidence="6">
        <text>(9Z)-octadecenoyl-CoA + H2O = (9Z)-octadecenoate + CoA + H(+)</text>
        <dbReference type="Rhea" id="RHEA:40139"/>
        <dbReference type="ChEBI" id="CHEBI:15377"/>
        <dbReference type="ChEBI" id="CHEBI:15378"/>
        <dbReference type="ChEBI" id="CHEBI:30823"/>
        <dbReference type="ChEBI" id="CHEBI:57287"/>
        <dbReference type="ChEBI" id="CHEBI:57387"/>
    </reaction>
    <physiologicalReaction direction="left-to-right" evidence="6">
        <dbReference type="Rhea" id="RHEA:40140"/>
    </physiologicalReaction>
</comment>
<comment type="catalytic activity">
    <reaction evidence="6">
        <text>(9Z,12Z)-octadecadienoyl-CoA + H2O = (9Z,12Z)-octadecadienoate + CoA + H(+)</text>
        <dbReference type="Rhea" id="RHEA:40143"/>
        <dbReference type="ChEBI" id="CHEBI:15377"/>
        <dbReference type="ChEBI" id="CHEBI:15378"/>
        <dbReference type="ChEBI" id="CHEBI:30245"/>
        <dbReference type="ChEBI" id="CHEBI:57287"/>
        <dbReference type="ChEBI" id="CHEBI:57383"/>
    </reaction>
    <physiologicalReaction direction="left-to-right" evidence="6">
        <dbReference type="Rhea" id="RHEA:40144"/>
    </physiologicalReaction>
</comment>
<comment type="activity regulation">
    <text evidence="6">Insensitive to feedback inhibition by free coenzyme A (CoASH).</text>
</comment>
<comment type="biophysicochemical properties">
    <kinetics>
        <KM evidence="6">5.8 uM for 18:1-CoA</KM>
        <KM evidence="6">17.8 uM for 12:0-CoA</KM>
        <Vmax evidence="6">13.0 umol/min/mg enzyme with 18:1-CoA as substrates</Vmax>
        <Vmax evidence="6">14.5 umol/min/mg enzyme with 12:0-CoA as substrates</Vmax>
        <Vmax evidence="6">21.0 umol/min/mg enzyme with 16:1-CoA as substrates</Vmax>
    </kinetics>
    <phDependence>
        <text>Optimum pH is 8.5-9.0.</text>
    </phDependence>
</comment>
<comment type="pathway">
    <text evidence="5 6">Lipid metabolism; fatty acid metabolism.</text>
</comment>
<comment type="subunit">
    <text evidence="6">Homotetramer.</text>
</comment>
<comment type="subcellular location">
    <subcellularLocation>
        <location evidence="1">Peroxisome matrix</location>
    </subcellularLocation>
    <text evidence="1">Predominantly localized in the peroxisome but a localization to the cytosol cannot be excluded.</text>
</comment>
<comment type="tissue specificity">
    <text evidence="6">Mostly expressed in leaves and flowers, and, to a lower extent, in seedlings and siliques.</text>
</comment>
<comment type="similarity">
    <text evidence="9">Belongs to the C/M/P thioester hydrolase family.</text>
</comment>
<comment type="sequence caution" evidence="9">
    <conflict type="erroneous gene model prediction">
        <sequence resource="EMBL-CDS" id="AAF78401"/>
    </conflict>
</comment>
<comment type="sequence caution" evidence="9">
    <conflict type="erroneous gene model prediction">
        <sequence resource="EMBL-CDS" id="AAF78421"/>
    </conflict>
</comment>
<comment type="sequence caution" evidence="9">
    <conflict type="frameshift">
        <sequence resource="EMBL-CDS" id="BAD93775"/>
    </conflict>
</comment>
<feature type="chain" id="PRO_0000454765" description="Acyl-CoA hydrolase 2">
    <location>
        <begin position="1"/>
        <end position="427"/>
    </location>
</feature>
<feature type="short sequence motif" description="Microbody targeting signal" evidence="3">
    <location>
        <begin position="425"/>
        <end position="427"/>
    </location>
</feature>
<feature type="active site" description="Charge relay system" evidence="2">
    <location>
        <position position="337"/>
    </location>
</feature>
<feature type="active site" description="Charge relay system" evidence="2">
    <location>
        <position position="359"/>
    </location>
</feature>
<feature type="active site" description="Charge relay system" evidence="2">
    <location>
        <position position="409"/>
    </location>
</feature>
<feature type="binding site" evidence="4">
    <location>
        <begin position="15"/>
        <end position="83"/>
    </location>
    <ligand>
        <name>a nucleoside 3',5'-cyclic phosphate</name>
        <dbReference type="ChEBI" id="CHEBI:58464"/>
    </ligand>
</feature>
<feature type="sequence conflict" description="In Ref. 6; BAD93775." evidence="9" ref="6">
    <original>E</original>
    <variation>V</variation>
    <location>
        <position position="4"/>
    </location>
</feature>
<feature type="sequence conflict" description="In Ref. 1; AAR21571, 4; BAC42016 and 5; AAO63418." evidence="9" ref="1 4 5">
    <original>L</original>
    <variation>S</variation>
    <location>
        <position position="141"/>
    </location>
</feature>
<sequence length="427" mass="48155">MNTESVVEFLGNVPLLQKLPSSSLKKIAQVVVPKRYGKGDYVVREDQTWDGCYFILQGEAQVSGPDEEDNRSEFLLKQYDYFGVGLSGNVHSADIVAMSQLTCLVLPRDHCHLLETNSIWQSDTSLDKCSLVERILQLDPLELNIFRGITLPDAPIFGKVFGGQFVGQALAAASKTVDFLKVVHSLHSYFLLVGDIDIPIIYQVHRIRDGNNFATRRVDAVQKGNIIFILLASFQKEQQGFEHQESTMPSVPDPDTLLSLEELRESRITDPHLPRSYRNKVATRNFVPWPIEIRFCEPSNSTNQTKSPPRLNYWFRAKGRLSDDQALHRCVVAFASDLIFCGVGLNPHRRKGVKSAALSLDHAMWFHRPLRADEWLLYVIVSPTAHETRGFVTGQMFNRKGELVVSLTQEALLREARPPKPSGTSKL</sequence>
<dbReference type="EC" id="3.1.2.20" evidence="5 6"/>
<dbReference type="EC" id="3.1.2.2" evidence="6"/>
<dbReference type="EMBL" id="AY456749">
    <property type="protein sequence ID" value="AAR21571.1"/>
    <property type="molecule type" value="mRNA"/>
</dbReference>
<dbReference type="EMBL" id="AC009273">
    <property type="protein sequence ID" value="AAF78401.1"/>
    <property type="status" value="ALT_SEQ"/>
    <property type="molecule type" value="Genomic_DNA"/>
</dbReference>
<dbReference type="EMBL" id="AC009273">
    <property type="protein sequence ID" value="AAF78421.1"/>
    <property type="status" value="ALT_SEQ"/>
    <property type="molecule type" value="Genomic_DNA"/>
</dbReference>
<dbReference type="EMBL" id="CP002684">
    <property type="protein sequence ID" value="AEE27325.1"/>
    <property type="molecule type" value="Genomic_DNA"/>
</dbReference>
<dbReference type="EMBL" id="AK117346">
    <property type="protein sequence ID" value="BAC42016.1"/>
    <property type="molecule type" value="mRNA"/>
</dbReference>
<dbReference type="EMBL" id="BT005354">
    <property type="protein sequence ID" value="AAO63418.1"/>
    <property type="molecule type" value="mRNA"/>
</dbReference>
<dbReference type="EMBL" id="AK221741">
    <property type="protein sequence ID" value="BAD93775.1"/>
    <property type="status" value="ALT_FRAME"/>
    <property type="molecule type" value="mRNA"/>
</dbReference>
<dbReference type="PIR" id="B86148">
    <property type="entry name" value="B86148"/>
</dbReference>
<dbReference type="PIR" id="C86148">
    <property type="entry name" value="C86148"/>
</dbReference>
<dbReference type="RefSeq" id="NP_563632.2">
    <property type="nucleotide sequence ID" value="NM_100053.4"/>
</dbReference>
<dbReference type="SMR" id="F4HU51"/>
<dbReference type="FunCoup" id="F4HU51">
    <property type="interactions" value="2009"/>
</dbReference>
<dbReference type="STRING" id="3702.F4HU51"/>
<dbReference type="PaxDb" id="3702-AT1G01710.1"/>
<dbReference type="ProteomicsDB" id="195868"/>
<dbReference type="EnsemblPlants" id="AT1G01710.1">
    <property type="protein sequence ID" value="AT1G01710.1"/>
    <property type="gene ID" value="AT1G01710"/>
</dbReference>
<dbReference type="GeneID" id="839254"/>
<dbReference type="Gramene" id="AT1G01710.1">
    <property type="protein sequence ID" value="AT1G01710.1"/>
    <property type="gene ID" value="AT1G01710"/>
</dbReference>
<dbReference type="KEGG" id="ath:AT1G01710"/>
<dbReference type="Araport" id="AT1G01710"/>
<dbReference type="TAIR" id="AT1G01710"/>
<dbReference type="eggNOG" id="KOG3016">
    <property type="taxonomic scope" value="Eukaryota"/>
</dbReference>
<dbReference type="HOGENOM" id="CLU_032690_5_0_1"/>
<dbReference type="InParanoid" id="F4HU51"/>
<dbReference type="OMA" id="QVWFRTN"/>
<dbReference type="BRENDA" id="3.1.2.2">
    <property type="organism ID" value="399"/>
</dbReference>
<dbReference type="UniPathway" id="UPA00199"/>
<dbReference type="PRO" id="PR:F4HU51"/>
<dbReference type="Proteomes" id="UP000006548">
    <property type="component" value="Chromosome 1"/>
</dbReference>
<dbReference type="ExpressionAtlas" id="F4HU51">
    <property type="expression patterns" value="baseline and differential"/>
</dbReference>
<dbReference type="GO" id="GO:0005782">
    <property type="term" value="C:peroxisomal matrix"/>
    <property type="evidence" value="ECO:0007669"/>
    <property type="project" value="UniProtKB-SubCell"/>
</dbReference>
<dbReference type="GO" id="GO:0005777">
    <property type="term" value="C:peroxisome"/>
    <property type="evidence" value="ECO:0007005"/>
    <property type="project" value="TAIR"/>
</dbReference>
<dbReference type="GO" id="GO:0047617">
    <property type="term" value="F:fatty acyl-CoA hydrolase activity"/>
    <property type="evidence" value="ECO:0000314"/>
    <property type="project" value="UniProtKB"/>
</dbReference>
<dbReference type="GO" id="GO:0052816">
    <property type="term" value="F:long-chain fatty acyl-CoA hydrolase activity"/>
    <property type="evidence" value="ECO:0000314"/>
    <property type="project" value="UniProtKB"/>
</dbReference>
<dbReference type="GO" id="GO:0052815">
    <property type="term" value="F:medium-chain fatty acyl-CoA hydrolase activity"/>
    <property type="evidence" value="ECO:0000314"/>
    <property type="project" value="UniProtKB"/>
</dbReference>
<dbReference type="GO" id="GO:0006637">
    <property type="term" value="P:acyl-CoA metabolic process"/>
    <property type="evidence" value="ECO:0007669"/>
    <property type="project" value="InterPro"/>
</dbReference>
<dbReference type="GO" id="GO:0006631">
    <property type="term" value="P:fatty acid metabolic process"/>
    <property type="evidence" value="ECO:0007669"/>
    <property type="project" value="UniProtKB-UniPathway"/>
</dbReference>
<dbReference type="GO" id="GO:0051289">
    <property type="term" value="P:protein homotetramerization"/>
    <property type="evidence" value="ECO:0000314"/>
    <property type="project" value="UniProtKB"/>
</dbReference>
<dbReference type="CDD" id="cd00038">
    <property type="entry name" value="CAP_ED"/>
    <property type="match status" value="1"/>
</dbReference>
<dbReference type="CDD" id="cd03444">
    <property type="entry name" value="Thioesterase_II_repeat1"/>
    <property type="match status" value="1"/>
</dbReference>
<dbReference type="CDD" id="cd03445">
    <property type="entry name" value="Thioesterase_II_repeat2"/>
    <property type="match status" value="1"/>
</dbReference>
<dbReference type="FunFam" id="2.40.160.210:FF:000003">
    <property type="entry name" value="Acyl-CoA thioesterase II"/>
    <property type="match status" value="1"/>
</dbReference>
<dbReference type="FunFam" id="2.60.120.10:FF:000109">
    <property type="entry name" value="Acyl-CoA thioesterase II"/>
    <property type="match status" value="1"/>
</dbReference>
<dbReference type="Gene3D" id="2.40.160.210">
    <property type="entry name" value="Acyl-CoA thioesterase, double hotdog domain"/>
    <property type="match status" value="1"/>
</dbReference>
<dbReference type="Gene3D" id="2.60.120.10">
    <property type="entry name" value="Jelly Rolls"/>
    <property type="match status" value="1"/>
</dbReference>
<dbReference type="InterPro" id="IPR049450">
    <property type="entry name" value="ACOT8-like_C"/>
</dbReference>
<dbReference type="InterPro" id="IPR042171">
    <property type="entry name" value="Acyl-CoA_hotdog"/>
</dbReference>
<dbReference type="InterPro" id="IPR003703">
    <property type="entry name" value="Acyl_CoA_thio"/>
</dbReference>
<dbReference type="InterPro" id="IPR000595">
    <property type="entry name" value="cNMP-bd_dom"/>
</dbReference>
<dbReference type="InterPro" id="IPR018490">
    <property type="entry name" value="cNMP-bd_dom_sf"/>
</dbReference>
<dbReference type="InterPro" id="IPR029069">
    <property type="entry name" value="HotDog_dom_sf"/>
</dbReference>
<dbReference type="InterPro" id="IPR014710">
    <property type="entry name" value="RmlC-like_jellyroll"/>
</dbReference>
<dbReference type="InterPro" id="IPR049449">
    <property type="entry name" value="TesB_ACOT8-like_N"/>
</dbReference>
<dbReference type="NCBIfam" id="TIGR00189">
    <property type="entry name" value="tesB"/>
    <property type="match status" value="1"/>
</dbReference>
<dbReference type="PANTHER" id="PTHR11066">
    <property type="entry name" value="ACYL-COA THIOESTERASE"/>
    <property type="match status" value="1"/>
</dbReference>
<dbReference type="PANTHER" id="PTHR11066:SF34">
    <property type="entry name" value="ACYL-COENZYME A THIOESTERASE 8"/>
    <property type="match status" value="1"/>
</dbReference>
<dbReference type="Pfam" id="PF13622">
    <property type="entry name" value="4HBT_3"/>
    <property type="match status" value="1"/>
</dbReference>
<dbReference type="Pfam" id="PF20789">
    <property type="entry name" value="4HBT_3C"/>
    <property type="match status" value="1"/>
</dbReference>
<dbReference type="Pfam" id="PF00027">
    <property type="entry name" value="cNMP_binding"/>
    <property type="match status" value="1"/>
</dbReference>
<dbReference type="SMART" id="SM00100">
    <property type="entry name" value="cNMP"/>
    <property type="match status" value="1"/>
</dbReference>
<dbReference type="SUPFAM" id="SSF51206">
    <property type="entry name" value="cAMP-binding domain-like"/>
    <property type="match status" value="1"/>
</dbReference>
<dbReference type="SUPFAM" id="SSF54637">
    <property type="entry name" value="Thioesterase/thiol ester dehydrase-isomerase"/>
    <property type="match status" value="2"/>
</dbReference>
<dbReference type="PROSITE" id="PS50042">
    <property type="entry name" value="CNMP_BINDING_3"/>
    <property type="match status" value="1"/>
</dbReference>